<protein>
    <recommendedName>
        <fullName>Putative transcription factor SEF1</fullName>
    </recommendedName>
    <alternativeName>
        <fullName>Suppressor protein SEF1</fullName>
    </alternativeName>
</protein>
<gene>
    <name type="primary">SEF1</name>
    <name type="ordered locus">KLLA0E20307g</name>
</gene>
<feature type="chain" id="PRO_0000114976" description="Putative transcription factor SEF1">
    <location>
        <begin position="1"/>
        <end position="1119"/>
    </location>
</feature>
<feature type="DNA-binding region" description="Zn(2)-C6 fungal-type" evidence="1">
    <location>
        <begin position="118"/>
        <end position="148"/>
    </location>
</feature>
<feature type="region of interest" description="Disordered" evidence="2">
    <location>
        <begin position="1"/>
        <end position="70"/>
    </location>
</feature>
<feature type="region of interest" description="Disordered" evidence="2">
    <location>
        <begin position="86"/>
        <end position="105"/>
    </location>
</feature>
<feature type="region of interest" description="Disordered" evidence="2">
    <location>
        <begin position="236"/>
        <end position="290"/>
    </location>
</feature>
<feature type="region of interest" description="Disordered" evidence="2">
    <location>
        <begin position="306"/>
        <end position="335"/>
    </location>
</feature>
<feature type="region of interest" description="Disordered" evidence="2">
    <location>
        <begin position="894"/>
        <end position="913"/>
    </location>
</feature>
<feature type="region of interest" description="Disordered" evidence="2">
    <location>
        <begin position="926"/>
        <end position="962"/>
    </location>
</feature>
<feature type="region of interest" description="Disordered" evidence="2">
    <location>
        <begin position="994"/>
        <end position="1018"/>
    </location>
</feature>
<feature type="compositionally biased region" description="Polar residues" evidence="2">
    <location>
        <begin position="47"/>
        <end position="70"/>
    </location>
</feature>
<feature type="compositionally biased region" description="Low complexity" evidence="2">
    <location>
        <begin position="243"/>
        <end position="260"/>
    </location>
</feature>
<feature type="compositionally biased region" description="Polar residues" evidence="2">
    <location>
        <begin position="261"/>
        <end position="288"/>
    </location>
</feature>
<feature type="compositionally biased region" description="Low complexity" evidence="2">
    <location>
        <begin position="306"/>
        <end position="322"/>
    </location>
</feature>
<feature type="compositionally biased region" description="Polar residues" evidence="2">
    <location>
        <begin position="323"/>
        <end position="335"/>
    </location>
</feature>
<feature type="compositionally biased region" description="Polar residues" evidence="2">
    <location>
        <begin position="902"/>
        <end position="913"/>
    </location>
</feature>
<feature type="compositionally biased region" description="Polar residues" evidence="2">
    <location>
        <begin position="931"/>
        <end position="942"/>
    </location>
</feature>
<feature type="compositionally biased region" description="Low complexity" evidence="2">
    <location>
        <begin position="943"/>
        <end position="954"/>
    </location>
</feature>
<feature type="sequence conflict" description="In Ref. 1; AAC39353." evidence="4" ref="1">
    <original>A</original>
    <variation>R</variation>
    <location>
        <position position="448"/>
    </location>
</feature>
<feature type="sequence conflict" description="In Ref. 1; AAC39353." evidence="4" ref="1">
    <original>C</original>
    <variation>S</variation>
    <location>
        <position position="466"/>
    </location>
</feature>
<feature type="sequence conflict" description="In Ref. 1; AAC39353." evidence="4" ref="1">
    <original>R</original>
    <variation>E</variation>
    <location>
        <position position="789"/>
    </location>
</feature>
<feature type="sequence conflict" description="In Ref. 1; AAC39353." evidence="4" ref="1">
    <original>A</original>
    <variation>S</variation>
    <location>
        <position position="1095"/>
    </location>
</feature>
<feature type="sequence conflict" description="In Ref. 1; AAC39353." evidence="4" ref="1">
    <original>GWFDMNMAPEF</original>
    <variation>DGSR</variation>
    <location>
        <begin position="1109"/>
        <end position="1119"/>
    </location>
</feature>
<accession>P87164</accession>
<accession>B4UN78</accession>
<accession>Q6CMG9</accession>
<sequence length="1119" mass="123242">MGDPVSSKRKSSVSDAVSTSKRQHQQVKVEDVNVPLSSREHSPGPQLHTQQSYYGNGTDGASESALTQSRNNNGATSVVAISDATQNGEDSSNISNNSNAVSKGKAVVNAGHRPVTSCTHCRQHKIKCNASEKFPAPCSRCERMGLHCEIDPQFRPKKGSQLQSLRNDVDELKVKIEYLTRNESLIAKALKQSNIGQNLLQAIKSVDFSYRVAGPTQGQVAKNKISVQTYLTNEPQLLQDSQTTTTNPTTSSNSKVVTPTGSDHSPASHNGGSLSSGKPQLLNDSVPANTKDRLPPVLQIALKRLSQQISSSSPQNSSPTTTGHSPANDLSSSKQHVVATTNAMPLLPSPHANIDEFVLGDVHISIEKATELHNIFVARFLPYFPIMQSNSATELYSQSQLLFWTVILTASLSDPEPTLYNKLSSLIKQLAIETCWIRTPRSTHISQALLILCNWPLPNQKVLDDCSYRFVGLAKSLSFQLGLHRGKFMTEFTRTQTSLPEAEKWRTRTWLGIFFAEQLWASILGLPPTSQTDYLIEKARLGDDGELPPILRKLICLANFQGKLCNVMGTSVVSPDGLMDARERAGSLAILERELERLDVKLKFQEDAAVEIYFLYIKLMICCFAFLPETPTEDQTKYVTEAYLCATKIITLLTKLLETQQLIELPIYIRHSATYSALILFKLYLTPLLLDKYVDSARQSIVTVHRLYRNQLTAWAASVENDISRTASVLEKLNFVLVTHPEVFIEEEGIISRMRSHLTGTLFYDLVWCVHEARRRQMDPNYDAEAAKRNKEKWFKNRRKLYPLPFYNQISKEDFETITQTTPGGTTVTTLVPTKSAIKQAKQLAQSQGDQNGPVTHINGIPLSMLDETGSVNIEGLLANANLNLSNEHSTVLASSSSTATRLNADNPTTDTNKFNVQTVFTHNIKKSSKSSDTPTNKPKFNSTSSIPTATPTSEQRAAHNTKTSASILTGDPNSLFSMNNSLQANIQLNKTLSADSNGTSNNNIPNSTAPLNTPDTNSFNSLTRSPDAPSYGNMNVFYNAANQGTNMNTLYSQSVPNAPQGISAPLSAQPVNVTNIPNGNVNSELDDFFLRQSAGWIEGNSSNDDFLGWFDMNMAPEF</sequence>
<evidence type="ECO:0000255" key="1">
    <source>
        <dbReference type="PROSITE-ProRule" id="PRU00227"/>
    </source>
</evidence>
<evidence type="ECO:0000256" key="2">
    <source>
        <dbReference type="SAM" id="MobiDB-lite"/>
    </source>
</evidence>
<evidence type="ECO:0000269" key="3">
    <source>
    </source>
</evidence>
<evidence type="ECO:0000305" key="4"/>
<proteinExistence type="predicted"/>
<reference key="1">
    <citation type="journal article" date="1998" name="Yeast">
        <title>Kluyveromyces lactis SEF1 and its Saccharomyces cerevisiae homologue bypass the unknown essential function, but not the mitochondrial RNase P function, of the S. cerevisiae RPM2 gene.</title>
        <authorList>
            <person name="Groom K.R."/>
            <person name="Heyman H.C."/>
            <person name="Steffen M.C."/>
            <person name="Hawkins L."/>
            <person name="Martin N.C."/>
        </authorList>
    </citation>
    <scope>NUCLEOTIDE SEQUENCE [GENOMIC DNA]</scope>
    <scope>FUNCTION</scope>
</reference>
<reference key="2">
    <citation type="journal article" date="2004" name="Nature">
        <title>Genome evolution in yeasts.</title>
        <authorList>
            <person name="Dujon B."/>
            <person name="Sherman D."/>
            <person name="Fischer G."/>
            <person name="Durrens P."/>
            <person name="Casaregola S."/>
            <person name="Lafontaine I."/>
            <person name="de Montigny J."/>
            <person name="Marck C."/>
            <person name="Neuveglise C."/>
            <person name="Talla E."/>
            <person name="Goffard N."/>
            <person name="Frangeul L."/>
            <person name="Aigle M."/>
            <person name="Anthouard V."/>
            <person name="Babour A."/>
            <person name="Barbe V."/>
            <person name="Barnay S."/>
            <person name="Blanchin S."/>
            <person name="Beckerich J.-M."/>
            <person name="Beyne E."/>
            <person name="Bleykasten C."/>
            <person name="Boisrame A."/>
            <person name="Boyer J."/>
            <person name="Cattolico L."/>
            <person name="Confanioleri F."/>
            <person name="de Daruvar A."/>
            <person name="Despons L."/>
            <person name="Fabre E."/>
            <person name="Fairhead C."/>
            <person name="Ferry-Dumazet H."/>
            <person name="Groppi A."/>
            <person name="Hantraye F."/>
            <person name="Hennequin C."/>
            <person name="Jauniaux N."/>
            <person name="Joyet P."/>
            <person name="Kachouri R."/>
            <person name="Kerrest A."/>
            <person name="Koszul R."/>
            <person name="Lemaire M."/>
            <person name="Lesur I."/>
            <person name="Ma L."/>
            <person name="Muller H."/>
            <person name="Nicaud J.-M."/>
            <person name="Nikolski M."/>
            <person name="Oztas S."/>
            <person name="Ozier-Kalogeropoulos O."/>
            <person name="Pellenz S."/>
            <person name="Potier S."/>
            <person name="Richard G.-F."/>
            <person name="Straub M.-L."/>
            <person name="Suleau A."/>
            <person name="Swennen D."/>
            <person name="Tekaia F."/>
            <person name="Wesolowski-Louvel M."/>
            <person name="Westhof E."/>
            <person name="Wirth B."/>
            <person name="Zeniou-Meyer M."/>
            <person name="Zivanovic Y."/>
            <person name="Bolotin-Fukuhara M."/>
            <person name="Thierry A."/>
            <person name="Bouchier C."/>
            <person name="Caudron B."/>
            <person name="Scarpelli C."/>
            <person name="Gaillardin C."/>
            <person name="Weissenbach J."/>
            <person name="Wincker P."/>
            <person name="Souciet J.-L."/>
        </authorList>
    </citation>
    <scope>NUCLEOTIDE SEQUENCE [LARGE SCALE GENOMIC DNA]</scope>
    <source>
        <strain>ATCC 8585 / CBS 2359 / DSM 70799 / NBRC 1267 / NRRL Y-1140 / WM37</strain>
    </source>
</reference>
<organism>
    <name type="scientific">Kluyveromyces lactis (strain ATCC 8585 / CBS 2359 / DSM 70799 / NBRC 1267 / NRRL Y-1140 / WM37)</name>
    <name type="common">Yeast</name>
    <name type="synonym">Candida sphaerica</name>
    <dbReference type="NCBI Taxonomy" id="284590"/>
    <lineage>
        <taxon>Eukaryota</taxon>
        <taxon>Fungi</taxon>
        <taxon>Dikarya</taxon>
        <taxon>Ascomycota</taxon>
        <taxon>Saccharomycotina</taxon>
        <taxon>Saccharomycetes</taxon>
        <taxon>Saccharomycetales</taxon>
        <taxon>Saccharomycetaceae</taxon>
        <taxon>Kluyveromyces</taxon>
    </lineage>
</organism>
<name>SEF1_KLULA</name>
<keyword id="KW-0238">DNA-binding</keyword>
<keyword id="KW-0479">Metal-binding</keyword>
<keyword id="KW-0539">Nucleus</keyword>
<keyword id="KW-1185">Reference proteome</keyword>
<keyword id="KW-0804">Transcription</keyword>
<keyword id="KW-0805">Transcription regulation</keyword>
<keyword id="KW-0862">Zinc</keyword>
<comment type="function">
    <text evidence="3">Putative transcription factor. Suppresses the lethal phenotype of RPM2 deletion.</text>
</comment>
<comment type="subcellular location">
    <subcellularLocation>
        <location evidence="4">Nucleus</location>
    </subcellularLocation>
</comment>
<comment type="sequence caution" evidence="4">
    <conflict type="frameshift">
        <sequence resource="EMBL-CDS" id="AAC39353"/>
    </conflict>
</comment>
<dbReference type="EMBL" id="U92898">
    <property type="protein sequence ID" value="AAC39353.1"/>
    <property type="status" value="ALT_FRAME"/>
    <property type="molecule type" value="Genomic_DNA"/>
</dbReference>
<dbReference type="EMBL" id="CR382125">
    <property type="protein sequence ID" value="CAR56749.1"/>
    <property type="molecule type" value="Genomic_DNA"/>
</dbReference>
<dbReference type="PIR" id="T18307">
    <property type="entry name" value="T18307"/>
</dbReference>
<dbReference type="RefSeq" id="XP_002999411.1">
    <property type="nucleotide sequence ID" value="XM_002999365.1"/>
</dbReference>
<dbReference type="FunCoup" id="P87164">
    <property type="interactions" value="144"/>
</dbReference>
<dbReference type="STRING" id="284590.P87164"/>
<dbReference type="PaxDb" id="284590-P87164"/>
<dbReference type="KEGG" id="kla:KLLA0_E20307g"/>
<dbReference type="eggNOG" id="ENOG502QR4T">
    <property type="taxonomic scope" value="Eukaryota"/>
</dbReference>
<dbReference type="HOGENOM" id="CLU_010150_0_0_1"/>
<dbReference type="InParanoid" id="P87164"/>
<dbReference type="Proteomes" id="UP000000598">
    <property type="component" value="Chromosome E"/>
</dbReference>
<dbReference type="GO" id="GO:0005634">
    <property type="term" value="C:nucleus"/>
    <property type="evidence" value="ECO:0007669"/>
    <property type="project" value="UniProtKB-SubCell"/>
</dbReference>
<dbReference type="GO" id="GO:0000981">
    <property type="term" value="F:DNA-binding transcription factor activity, RNA polymerase II-specific"/>
    <property type="evidence" value="ECO:0007669"/>
    <property type="project" value="InterPro"/>
</dbReference>
<dbReference type="GO" id="GO:0000976">
    <property type="term" value="F:transcription cis-regulatory region binding"/>
    <property type="evidence" value="ECO:0007669"/>
    <property type="project" value="TreeGrafter"/>
</dbReference>
<dbReference type="GO" id="GO:0008270">
    <property type="term" value="F:zinc ion binding"/>
    <property type="evidence" value="ECO:0007669"/>
    <property type="project" value="InterPro"/>
</dbReference>
<dbReference type="GO" id="GO:0006351">
    <property type="term" value="P:DNA-templated transcription"/>
    <property type="evidence" value="ECO:0007669"/>
    <property type="project" value="InterPro"/>
</dbReference>
<dbReference type="CDD" id="cd12148">
    <property type="entry name" value="fungal_TF_MHR"/>
    <property type="match status" value="1"/>
</dbReference>
<dbReference type="CDD" id="cd00067">
    <property type="entry name" value="GAL4"/>
    <property type="match status" value="1"/>
</dbReference>
<dbReference type="FunFam" id="4.10.240.10:FF:000003">
    <property type="entry name" value="C6 transcription factor (Leu3)"/>
    <property type="match status" value="1"/>
</dbReference>
<dbReference type="Gene3D" id="4.10.240.10">
    <property type="entry name" value="Zn(2)-C6 fungal-type DNA-binding domain"/>
    <property type="match status" value="1"/>
</dbReference>
<dbReference type="InterPro" id="IPR051089">
    <property type="entry name" value="prtT"/>
</dbReference>
<dbReference type="InterPro" id="IPR007219">
    <property type="entry name" value="Transcription_factor_dom_fun"/>
</dbReference>
<dbReference type="InterPro" id="IPR036864">
    <property type="entry name" value="Zn2-C6_fun-type_DNA-bd_sf"/>
</dbReference>
<dbReference type="InterPro" id="IPR001138">
    <property type="entry name" value="Zn2Cys6_DnaBD"/>
</dbReference>
<dbReference type="PANTHER" id="PTHR31845">
    <property type="entry name" value="FINGER DOMAIN PROTEIN, PUTATIVE-RELATED"/>
    <property type="match status" value="1"/>
</dbReference>
<dbReference type="PANTHER" id="PTHR31845:SF6">
    <property type="entry name" value="TRANSCRIPTION FACTOR SEF1-RELATED"/>
    <property type="match status" value="1"/>
</dbReference>
<dbReference type="Pfam" id="PF04082">
    <property type="entry name" value="Fungal_trans"/>
    <property type="match status" value="1"/>
</dbReference>
<dbReference type="Pfam" id="PF00172">
    <property type="entry name" value="Zn_clus"/>
    <property type="match status" value="1"/>
</dbReference>
<dbReference type="SMART" id="SM00906">
    <property type="entry name" value="Fungal_trans"/>
    <property type="match status" value="1"/>
</dbReference>
<dbReference type="SMART" id="SM00066">
    <property type="entry name" value="GAL4"/>
    <property type="match status" value="1"/>
</dbReference>
<dbReference type="SUPFAM" id="SSF57701">
    <property type="entry name" value="Zn2/Cys6 DNA-binding domain"/>
    <property type="match status" value="1"/>
</dbReference>
<dbReference type="PROSITE" id="PS00463">
    <property type="entry name" value="ZN2_CY6_FUNGAL_1"/>
    <property type="match status" value="1"/>
</dbReference>
<dbReference type="PROSITE" id="PS50048">
    <property type="entry name" value="ZN2_CY6_FUNGAL_2"/>
    <property type="match status" value="1"/>
</dbReference>